<gene>
    <name type="primary">rpl15e</name>
    <name type="ordered locus">VNG_0177G</name>
</gene>
<feature type="chain" id="PRO_0000127571" description="Large ribosomal subunit protein eL15">
    <location>
        <begin position="1"/>
        <end position="196"/>
    </location>
</feature>
<feature type="region of interest" description="Disordered" evidence="1">
    <location>
        <begin position="162"/>
        <end position="196"/>
    </location>
</feature>
<feature type="compositionally biased region" description="Basic residues" evidence="1">
    <location>
        <begin position="162"/>
        <end position="172"/>
    </location>
</feature>
<protein>
    <recommendedName>
        <fullName evidence="2">Large ribosomal subunit protein eL15</fullName>
    </recommendedName>
    <alternativeName>
        <fullName>50S ribosomal protein L15e</fullName>
    </alternativeName>
</protein>
<dbReference type="EMBL" id="AE004437">
    <property type="protein sequence ID" value="AAG18792.1"/>
    <property type="molecule type" value="Genomic_DNA"/>
</dbReference>
<dbReference type="PIR" id="D84178">
    <property type="entry name" value="D84178"/>
</dbReference>
<dbReference type="RefSeq" id="WP_010902087.1">
    <property type="nucleotide sequence ID" value="NC_002607.1"/>
</dbReference>
<dbReference type="SMR" id="Q9HSL2"/>
<dbReference type="FunCoup" id="Q9HSL2">
    <property type="interactions" value="144"/>
</dbReference>
<dbReference type="STRING" id="64091.VNG_0177G"/>
<dbReference type="PaxDb" id="64091-VNG_0177G"/>
<dbReference type="KEGG" id="hal:VNG_0177G"/>
<dbReference type="PATRIC" id="fig|64091.14.peg.128"/>
<dbReference type="HOGENOM" id="CLU_080796_1_0_2"/>
<dbReference type="InParanoid" id="Q9HSL2"/>
<dbReference type="OrthoDB" id="8183at2157"/>
<dbReference type="PhylomeDB" id="Q9HSL2"/>
<dbReference type="Proteomes" id="UP000000554">
    <property type="component" value="Chromosome"/>
</dbReference>
<dbReference type="GO" id="GO:0022625">
    <property type="term" value="C:cytosolic large ribosomal subunit"/>
    <property type="evidence" value="ECO:0000318"/>
    <property type="project" value="GO_Central"/>
</dbReference>
<dbReference type="GO" id="GO:0003723">
    <property type="term" value="F:RNA binding"/>
    <property type="evidence" value="ECO:0000318"/>
    <property type="project" value="GO_Central"/>
</dbReference>
<dbReference type="GO" id="GO:0003735">
    <property type="term" value="F:structural constituent of ribosome"/>
    <property type="evidence" value="ECO:0000318"/>
    <property type="project" value="GO_Central"/>
</dbReference>
<dbReference type="GO" id="GO:0002181">
    <property type="term" value="P:cytoplasmic translation"/>
    <property type="evidence" value="ECO:0000318"/>
    <property type="project" value="GO_Central"/>
</dbReference>
<dbReference type="FunFam" id="3.40.1120.10:FF:000002">
    <property type="entry name" value="50S ribosomal protein L15e"/>
    <property type="match status" value="1"/>
</dbReference>
<dbReference type="Gene3D" id="3.40.1120.10">
    <property type="entry name" value="Ribosomal protein l15e"/>
    <property type="match status" value="1"/>
</dbReference>
<dbReference type="HAMAP" id="MF_00256">
    <property type="entry name" value="Ribosomal_eL15"/>
    <property type="match status" value="1"/>
</dbReference>
<dbReference type="InterPro" id="IPR024794">
    <property type="entry name" value="Rbsml_eL15_core_dom_sf"/>
</dbReference>
<dbReference type="InterPro" id="IPR000439">
    <property type="entry name" value="Ribosomal_eL15"/>
</dbReference>
<dbReference type="InterPro" id="IPR020926">
    <property type="entry name" value="Ribosomal_eL15_arc"/>
</dbReference>
<dbReference type="InterPro" id="IPR020925">
    <property type="entry name" value="Ribosomal_eL15_CS"/>
</dbReference>
<dbReference type="InterPro" id="IPR012678">
    <property type="entry name" value="Ribosomal_uL23/eL15/eS24_sf"/>
</dbReference>
<dbReference type="NCBIfam" id="NF003269">
    <property type="entry name" value="PRK04243.1"/>
    <property type="match status" value="1"/>
</dbReference>
<dbReference type="PANTHER" id="PTHR11847:SF4">
    <property type="entry name" value="LARGE RIBOSOMAL SUBUNIT PROTEIN EL15"/>
    <property type="match status" value="1"/>
</dbReference>
<dbReference type="PANTHER" id="PTHR11847">
    <property type="entry name" value="RIBOSOMAL PROTEIN L15"/>
    <property type="match status" value="1"/>
</dbReference>
<dbReference type="Pfam" id="PF00827">
    <property type="entry name" value="Ribosomal_L15e"/>
    <property type="match status" value="1"/>
</dbReference>
<dbReference type="SMART" id="SM01384">
    <property type="entry name" value="Ribosomal_L15e"/>
    <property type="match status" value="1"/>
</dbReference>
<dbReference type="SUPFAM" id="SSF54189">
    <property type="entry name" value="Ribosomal proteins S24e, L23 and L15e"/>
    <property type="match status" value="1"/>
</dbReference>
<dbReference type="PROSITE" id="PS01194">
    <property type="entry name" value="RIBOSOMAL_L15E"/>
    <property type="match status" value="1"/>
</dbReference>
<sequence length="196" mass="22688">MARSFYSHIKEAWEDPDDGKLAELQWQRKQDWRKEGAIERVDRPTRLDKARELGYKAKQGVVVVRVSVRKGTARKSRFKAGRRTKRQGVNRIGRAKNLQRIAEERASRKYVNLRTLNSYWVGEDGSQKWFEAILLDPEHGAIQNDDDLNWICDDSHKNRVFRGKTSAGRRARGLQNRGKGTEGLRPSTNADKRNKS</sequence>
<keyword id="KW-1185">Reference proteome</keyword>
<keyword id="KW-0687">Ribonucleoprotein</keyword>
<keyword id="KW-0689">Ribosomal protein</keyword>
<evidence type="ECO:0000256" key="1">
    <source>
        <dbReference type="SAM" id="MobiDB-lite"/>
    </source>
</evidence>
<evidence type="ECO:0000305" key="2"/>
<accession>Q9HSL2</accession>
<name>RL15E_HALSA</name>
<proteinExistence type="inferred from homology"/>
<organism>
    <name type="scientific">Halobacterium salinarum (strain ATCC 700922 / JCM 11081 / NRC-1)</name>
    <name type="common">Halobacterium halobium</name>
    <dbReference type="NCBI Taxonomy" id="64091"/>
    <lineage>
        <taxon>Archaea</taxon>
        <taxon>Methanobacteriati</taxon>
        <taxon>Methanobacteriota</taxon>
        <taxon>Stenosarchaea group</taxon>
        <taxon>Halobacteria</taxon>
        <taxon>Halobacteriales</taxon>
        <taxon>Halobacteriaceae</taxon>
        <taxon>Halobacterium</taxon>
        <taxon>Halobacterium salinarum NRC-34001</taxon>
    </lineage>
</organism>
<comment type="similarity">
    <text evidence="2">Belongs to the eukaryotic ribosomal protein eL15 family.</text>
</comment>
<reference key="1">
    <citation type="journal article" date="2000" name="Proc. Natl. Acad. Sci. U.S.A.">
        <title>Genome sequence of Halobacterium species NRC-1.</title>
        <authorList>
            <person name="Ng W.V."/>
            <person name="Kennedy S.P."/>
            <person name="Mahairas G.G."/>
            <person name="Berquist B."/>
            <person name="Pan M."/>
            <person name="Shukla H.D."/>
            <person name="Lasky S.R."/>
            <person name="Baliga N.S."/>
            <person name="Thorsson V."/>
            <person name="Sbrogna J."/>
            <person name="Swartzell S."/>
            <person name="Weir D."/>
            <person name="Hall J."/>
            <person name="Dahl T.A."/>
            <person name="Welti R."/>
            <person name="Goo Y.A."/>
            <person name="Leithauser B."/>
            <person name="Keller K."/>
            <person name="Cruz R."/>
            <person name="Danson M.J."/>
            <person name="Hough D.W."/>
            <person name="Maddocks D.G."/>
            <person name="Jablonski P.E."/>
            <person name="Krebs M.P."/>
            <person name="Angevine C.M."/>
            <person name="Dale H."/>
            <person name="Isenbarger T.A."/>
            <person name="Peck R.F."/>
            <person name="Pohlschroder M."/>
            <person name="Spudich J.L."/>
            <person name="Jung K.-H."/>
            <person name="Alam M."/>
            <person name="Freitas T."/>
            <person name="Hou S."/>
            <person name="Daniels C.J."/>
            <person name="Dennis P.P."/>
            <person name="Omer A.D."/>
            <person name="Ebhardt H."/>
            <person name="Lowe T.M."/>
            <person name="Liang P."/>
            <person name="Riley M."/>
            <person name="Hood L."/>
            <person name="DasSarma S."/>
        </authorList>
    </citation>
    <scope>NUCLEOTIDE SEQUENCE [LARGE SCALE GENOMIC DNA]</scope>
    <source>
        <strain>ATCC 700922 / JCM 11081 / NRC-1</strain>
    </source>
</reference>